<comment type="catalytic activity">
    <reaction evidence="1">
        <text>diphosphate + H2O = 2 phosphate + H(+)</text>
        <dbReference type="Rhea" id="RHEA:24576"/>
        <dbReference type="ChEBI" id="CHEBI:15377"/>
        <dbReference type="ChEBI" id="CHEBI:15378"/>
        <dbReference type="ChEBI" id="CHEBI:33019"/>
        <dbReference type="ChEBI" id="CHEBI:43474"/>
        <dbReference type="EC" id="3.6.1.1"/>
    </reaction>
</comment>
<comment type="cofactor">
    <cofactor evidence="1">
        <name>Mn(2+)</name>
        <dbReference type="ChEBI" id="CHEBI:29035"/>
    </cofactor>
    <text evidence="1">Binds 2 manganese ions per subunit.</text>
</comment>
<comment type="subcellular location">
    <subcellularLocation>
        <location evidence="1">Cytoplasm</location>
    </subcellularLocation>
</comment>
<comment type="similarity">
    <text evidence="1">Belongs to the PPase class C family.</text>
</comment>
<organism>
    <name type="scientific">Lactobacillus acidophilus (strain ATCC 700396 / NCK56 / N2 / NCFM)</name>
    <dbReference type="NCBI Taxonomy" id="272621"/>
    <lineage>
        <taxon>Bacteria</taxon>
        <taxon>Bacillati</taxon>
        <taxon>Bacillota</taxon>
        <taxon>Bacilli</taxon>
        <taxon>Lactobacillales</taxon>
        <taxon>Lactobacillaceae</taxon>
        <taxon>Lactobacillus</taxon>
    </lineage>
</organism>
<name>PPAC_LACAC</name>
<sequence>MEKEFVFGHQNPDTDAIGTAIAFSYLQNKLGYNTEAVALGEPNDETAYALKKFGFEAPRVIKEAAPEVDSVMLVDHNEPQQSVSDIDKVKVTHVVDHHRIMNFNTADPLYYRAEPVGCTSTIVWKMFNENDIEIPEKIAGIMLSAIISDTLLLKSPTTTDDDKEAVEALAKIAGVDYKDYGLAMLKAGTNINDKSEEELIDLDAKSFELNGHNVRVAQINVVDLPEALERKDAFLKAMEKASNDNDYDMFMLLITNILDSDSEALVVGSDETKSFFEKAFDKKLDDSEVKLPGVVSRKKQVVPPLTDAFNA</sequence>
<evidence type="ECO:0000255" key="1">
    <source>
        <dbReference type="HAMAP-Rule" id="MF_00207"/>
    </source>
</evidence>
<keyword id="KW-0963">Cytoplasm</keyword>
<keyword id="KW-0378">Hydrolase</keyword>
<keyword id="KW-0464">Manganese</keyword>
<keyword id="KW-0479">Metal-binding</keyword>
<keyword id="KW-1185">Reference proteome</keyword>
<feature type="chain" id="PRO_1000012312" description="Probable manganese-dependent inorganic pyrophosphatase">
    <location>
        <begin position="1"/>
        <end position="311"/>
    </location>
</feature>
<feature type="binding site" evidence="1">
    <location>
        <position position="9"/>
    </location>
    <ligand>
        <name>Mn(2+)</name>
        <dbReference type="ChEBI" id="CHEBI:29035"/>
        <label>1</label>
    </ligand>
</feature>
<feature type="binding site" evidence="1">
    <location>
        <position position="13"/>
    </location>
    <ligand>
        <name>Mn(2+)</name>
        <dbReference type="ChEBI" id="CHEBI:29035"/>
        <label>1</label>
    </ligand>
</feature>
<feature type="binding site" evidence="1">
    <location>
        <position position="15"/>
    </location>
    <ligand>
        <name>Mn(2+)</name>
        <dbReference type="ChEBI" id="CHEBI:29035"/>
        <label>2</label>
    </ligand>
</feature>
<feature type="binding site" evidence="1">
    <location>
        <position position="75"/>
    </location>
    <ligand>
        <name>Mn(2+)</name>
        <dbReference type="ChEBI" id="CHEBI:29035"/>
        <label>1</label>
    </ligand>
</feature>
<feature type="binding site" evidence="1">
    <location>
        <position position="75"/>
    </location>
    <ligand>
        <name>Mn(2+)</name>
        <dbReference type="ChEBI" id="CHEBI:29035"/>
        <label>2</label>
    </ligand>
</feature>
<feature type="binding site" evidence="1">
    <location>
        <position position="97"/>
    </location>
    <ligand>
        <name>Mn(2+)</name>
        <dbReference type="ChEBI" id="CHEBI:29035"/>
        <label>2</label>
    </ligand>
</feature>
<feature type="binding site" evidence="1">
    <location>
        <position position="149"/>
    </location>
    <ligand>
        <name>Mn(2+)</name>
        <dbReference type="ChEBI" id="CHEBI:29035"/>
        <label>2</label>
    </ligand>
</feature>
<reference key="1">
    <citation type="journal article" date="2005" name="Proc. Natl. Acad. Sci. U.S.A.">
        <title>Complete genome sequence of the probiotic lactic acid bacterium Lactobacillus acidophilus NCFM.</title>
        <authorList>
            <person name="Altermann E."/>
            <person name="Russell W.M."/>
            <person name="Azcarate-Peril M.A."/>
            <person name="Barrangou R."/>
            <person name="Buck B.L."/>
            <person name="McAuliffe O."/>
            <person name="Souther N."/>
            <person name="Dobson A."/>
            <person name="Duong T."/>
            <person name="Callanan M."/>
            <person name="Lick S."/>
            <person name="Hamrick A."/>
            <person name="Cano R."/>
            <person name="Klaenhammer T.R."/>
        </authorList>
    </citation>
    <scope>NUCLEOTIDE SEQUENCE [LARGE SCALE GENOMIC DNA]</scope>
    <source>
        <strain>ATCC 700396 / NCK56 / N2 / NCFM</strain>
    </source>
</reference>
<dbReference type="EC" id="3.6.1.1" evidence="1"/>
<dbReference type="EMBL" id="CP000033">
    <property type="protein sequence ID" value="AAV42969.1"/>
    <property type="molecule type" value="Genomic_DNA"/>
</dbReference>
<dbReference type="RefSeq" id="WP_003547481.1">
    <property type="nucleotide sequence ID" value="NC_006814.3"/>
</dbReference>
<dbReference type="RefSeq" id="YP_194000.1">
    <property type="nucleotide sequence ID" value="NC_006814.3"/>
</dbReference>
<dbReference type="SMR" id="Q5FK05"/>
<dbReference type="STRING" id="272621.LBA1125"/>
<dbReference type="KEGG" id="lac:LBA1125"/>
<dbReference type="PATRIC" id="fig|272621.13.peg.1071"/>
<dbReference type="eggNOG" id="COG1227">
    <property type="taxonomic scope" value="Bacteria"/>
</dbReference>
<dbReference type="HOGENOM" id="CLU_025243_0_1_9"/>
<dbReference type="OrthoDB" id="9766150at2"/>
<dbReference type="BioCyc" id="LACI272621:G1G49-1120-MONOMER"/>
<dbReference type="Proteomes" id="UP000006381">
    <property type="component" value="Chromosome"/>
</dbReference>
<dbReference type="GO" id="GO:0005737">
    <property type="term" value="C:cytoplasm"/>
    <property type="evidence" value="ECO:0007669"/>
    <property type="project" value="UniProtKB-SubCell"/>
</dbReference>
<dbReference type="GO" id="GO:0004427">
    <property type="term" value="F:inorganic diphosphate phosphatase activity"/>
    <property type="evidence" value="ECO:0007669"/>
    <property type="project" value="UniProtKB-UniRule"/>
</dbReference>
<dbReference type="GO" id="GO:0030145">
    <property type="term" value="F:manganese ion binding"/>
    <property type="evidence" value="ECO:0007669"/>
    <property type="project" value="UniProtKB-UniRule"/>
</dbReference>
<dbReference type="FunFam" id="3.10.310.20:FF:000001">
    <property type="entry name" value="Probable manganese-dependent inorganic pyrophosphatase"/>
    <property type="match status" value="1"/>
</dbReference>
<dbReference type="FunFam" id="3.90.1640.10:FF:000001">
    <property type="entry name" value="Probable manganese-dependent inorganic pyrophosphatase"/>
    <property type="match status" value="1"/>
</dbReference>
<dbReference type="Gene3D" id="3.10.310.20">
    <property type="entry name" value="DHHA2 domain"/>
    <property type="match status" value="1"/>
</dbReference>
<dbReference type="Gene3D" id="3.90.1640.10">
    <property type="entry name" value="inorganic pyrophosphatase (n-terminal core)"/>
    <property type="match status" value="1"/>
</dbReference>
<dbReference type="HAMAP" id="MF_00207">
    <property type="entry name" value="PPase_C"/>
    <property type="match status" value="1"/>
</dbReference>
<dbReference type="InterPro" id="IPR001667">
    <property type="entry name" value="DDH_dom"/>
</dbReference>
<dbReference type="InterPro" id="IPR038763">
    <property type="entry name" value="DHH_sf"/>
</dbReference>
<dbReference type="InterPro" id="IPR004097">
    <property type="entry name" value="DHHA2"/>
</dbReference>
<dbReference type="InterPro" id="IPR038222">
    <property type="entry name" value="DHHA2_dom_sf"/>
</dbReference>
<dbReference type="InterPro" id="IPR022934">
    <property type="entry name" value="Mn-dep_inorganic_PyrPase"/>
</dbReference>
<dbReference type="InterPro" id="IPR051319">
    <property type="entry name" value="Oligoribo/pAp-PDE_c-di-AMP_PDE"/>
</dbReference>
<dbReference type="NCBIfam" id="NF003877">
    <property type="entry name" value="PRK05427.1"/>
    <property type="match status" value="1"/>
</dbReference>
<dbReference type="PANTHER" id="PTHR47618">
    <property type="entry name" value="BIFUNCTIONAL OLIGORIBONUCLEASE AND PAP PHOSPHATASE NRNA"/>
    <property type="match status" value="1"/>
</dbReference>
<dbReference type="PANTHER" id="PTHR47618:SF1">
    <property type="entry name" value="BIFUNCTIONAL OLIGORIBONUCLEASE AND PAP PHOSPHATASE NRNA"/>
    <property type="match status" value="1"/>
</dbReference>
<dbReference type="Pfam" id="PF01368">
    <property type="entry name" value="DHH"/>
    <property type="match status" value="1"/>
</dbReference>
<dbReference type="Pfam" id="PF02833">
    <property type="entry name" value="DHHA2"/>
    <property type="match status" value="1"/>
</dbReference>
<dbReference type="SMART" id="SM01131">
    <property type="entry name" value="DHHA2"/>
    <property type="match status" value="1"/>
</dbReference>
<dbReference type="SUPFAM" id="SSF64182">
    <property type="entry name" value="DHH phosphoesterases"/>
    <property type="match status" value="1"/>
</dbReference>
<proteinExistence type="inferred from homology"/>
<protein>
    <recommendedName>
        <fullName evidence="1">Probable manganese-dependent inorganic pyrophosphatase</fullName>
        <ecNumber evidence="1">3.6.1.1</ecNumber>
    </recommendedName>
    <alternativeName>
        <fullName evidence="1">Pyrophosphate phospho-hydrolase</fullName>
        <shortName evidence="1">PPase</shortName>
    </alternativeName>
</protein>
<gene>
    <name evidence="1" type="primary">ppaC</name>
    <name type="ordered locus">LBA1125</name>
</gene>
<accession>Q5FK05</accession>